<gene>
    <name type="ordered locus">OtCpg00170</name>
</gene>
<proteinExistence type="predicted"/>
<feature type="chain" id="PRO_0000361002" description="Uncharacterized protein OtCpg00170">
    <location>
        <begin position="1"/>
        <end position="1260"/>
    </location>
</feature>
<protein>
    <recommendedName>
        <fullName>Uncharacterized protein OtCpg00170</fullName>
    </recommendedName>
    <alternativeName>
        <fullName>ORF1260</fullName>
    </alternativeName>
</protein>
<keyword id="KW-0150">Chloroplast</keyword>
<keyword id="KW-0934">Plastid</keyword>
<keyword id="KW-1185">Reference proteome</keyword>
<reference key="1">
    <citation type="journal article" date="2007" name="Mol. Biol. Evol.">
        <title>The complete chloroplast and mitochondrial DNA sequence of Ostreococcus tauri: organelle genomes of the smallest eukaryote are examples of compaction.</title>
        <authorList>
            <person name="Robbens S."/>
            <person name="Derelle E."/>
            <person name="Ferraz C."/>
            <person name="Wuyts J."/>
            <person name="Moreau H."/>
            <person name="Van de Peer Y."/>
        </authorList>
    </citation>
    <scope>NUCLEOTIDE SEQUENCE [LARGE SCALE GENOMIC DNA]</scope>
    <source>
        <strain>OTTH0595</strain>
    </source>
</reference>
<dbReference type="EMBL" id="CR954199">
    <property type="protein sequence ID" value="CAL36342.1"/>
    <property type="molecule type" value="Genomic_DNA"/>
</dbReference>
<dbReference type="SMR" id="Q0P3N5"/>
<dbReference type="STRING" id="70448.Q0P3N5"/>
<dbReference type="KEGG" id="ota:OstapCp17"/>
<dbReference type="eggNOG" id="KOG0731">
    <property type="taxonomic scope" value="Eukaryota"/>
</dbReference>
<dbReference type="InParanoid" id="Q0P3N5"/>
<dbReference type="Proteomes" id="UP000009170">
    <property type="component" value="Chloroplast"/>
</dbReference>
<dbReference type="GO" id="GO:0009507">
    <property type="term" value="C:chloroplast"/>
    <property type="evidence" value="ECO:0007669"/>
    <property type="project" value="UniProtKB-SubCell"/>
</dbReference>
<dbReference type="GO" id="GO:0005524">
    <property type="term" value="F:ATP binding"/>
    <property type="evidence" value="ECO:0007669"/>
    <property type="project" value="InterPro"/>
</dbReference>
<dbReference type="GO" id="GO:0016887">
    <property type="term" value="F:ATP hydrolysis activity"/>
    <property type="evidence" value="ECO:0007669"/>
    <property type="project" value="InterPro"/>
</dbReference>
<dbReference type="GO" id="GO:0004176">
    <property type="term" value="F:ATP-dependent peptidase activity"/>
    <property type="evidence" value="ECO:0007669"/>
    <property type="project" value="TreeGrafter"/>
</dbReference>
<dbReference type="GO" id="GO:0006508">
    <property type="term" value="P:proteolysis"/>
    <property type="evidence" value="ECO:0007669"/>
    <property type="project" value="TreeGrafter"/>
</dbReference>
<dbReference type="CDD" id="cd19481">
    <property type="entry name" value="RecA-like_protease"/>
    <property type="match status" value="1"/>
</dbReference>
<dbReference type="Gene3D" id="1.10.8.60">
    <property type="match status" value="1"/>
</dbReference>
<dbReference type="Gene3D" id="3.40.50.300">
    <property type="entry name" value="P-loop containing nucleotide triphosphate hydrolases"/>
    <property type="match status" value="1"/>
</dbReference>
<dbReference type="InterPro" id="IPR003959">
    <property type="entry name" value="ATPase_AAA_core"/>
</dbReference>
<dbReference type="InterPro" id="IPR027417">
    <property type="entry name" value="P-loop_NTPase"/>
</dbReference>
<dbReference type="PANTHER" id="PTHR23076:SF97">
    <property type="entry name" value="ATP-DEPENDENT ZINC METALLOPROTEASE YME1L1"/>
    <property type="match status" value="1"/>
</dbReference>
<dbReference type="PANTHER" id="PTHR23076">
    <property type="entry name" value="METALLOPROTEASE M41 FTSH"/>
    <property type="match status" value="1"/>
</dbReference>
<dbReference type="Pfam" id="PF00004">
    <property type="entry name" value="AAA"/>
    <property type="match status" value="1"/>
</dbReference>
<dbReference type="SUPFAM" id="SSF52540">
    <property type="entry name" value="P-loop containing nucleoside triphosphate hydrolases"/>
    <property type="match status" value="1"/>
</dbReference>
<accession>Q0P3N5</accession>
<comment type="subcellular location">
    <subcellularLocation>
        <location>Plastid</location>
        <location>Chloroplast</location>
    </subcellularLocation>
</comment>
<organism>
    <name type="scientific">Ostreococcus tauri</name>
    <dbReference type="NCBI Taxonomy" id="70448"/>
    <lineage>
        <taxon>Eukaryota</taxon>
        <taxon>Viridiplantae</taxon>
        <taxon>Chlorophyta</taxon>
        <taxon>Mamiellophyceae</taxon>
        <taxon>Mamiellales</taxon>
        <taxon>Bathycoccaceae</taxon>
        <taxon>Ostreococcus</taxon>
    </lineage>
</organism>
<sequence>MTQENNNSTNLKTVIIPFHEFIANELGNNCIKPNDEILTVLLKREEWEGHEDGGETPTELSDRVKNWQPYDARKDRQQLTRVEQIQYQLKYGVKSLQLILGQAFYRISLVNAIMHRQYEQGVKVTSRGRAKNILGVVKWNATYWPQYLKYYGFSGILNYCLTVLDYRRVFQLSVFTIAMGAGIMRFGLAQKLTKTQPTYVISAEKFSVQPKSKSEQNLLMEKVFGKKLPKALENPIVLYVEPLGLTNIQLRDEGTKEITNYPFIGLTPETLTTHRSARPMVPTYEGLEKFDADYLKAIRAASYLIDQETLKNVIDTGTVSKNSIHSPNFFEKVDLNFFEYEEFDEKTDNNQSSVQELSQFFNPKMIRTLSTEGISLGTQPDWKMAGPKLQTNTLAVNDVYPLIDKYWSESKADQIHKTSADFQLENSVGKLTSAAYRTESEFDFNDLEDFDGLEVDEWDDFYFDRKSFRAKTAERENEKFNEFLMQTSMDELGLYKNGFPSLELKRINENLTKEQFKDLELIGGLLPSIFTWYAFYTLYQFRLNYIYNVRKKPEPILYTRLDHFGRLQNKVKLNEVVGIDGGGEAFDKLFSALQRARGMGLYLPTVLLTIWESSLSPLIPGELDNWLLTQRNKVRMNFIKHTTSKVDFLMPEVTLAQKMLSDPDKTSGYESRFHFLTHAVDSAINKMDAFEKSNSKMLSNLELTLQESKTKMSKIRHLQGLLPIMKVKELFKVTLKLLQLIENELSHSPVISALKPGRYGLNTLPKGMLLVGDPGNGRSFLARAIASESRLPVFKTESTRFLDVKFGVMRLMSLFRRVRDQAPGILFIRDIDLITIDRERTNSPELIQLTTQFLICFDGYYIGSEARPTQRKIFTLGSVSDITRMDPACLRSGRFEWVVNLRKPILGERKFLLLQKASQSPVQIDATIAWNYFGLMSEGFTNAEVVSIVNNSTLQAIRKNEFVHTNESLNEGLNSIFQLRWNQTVSKAADEGFFNELHLSEVINSNKLTVDYTMNEKERPFKTKCMHLLTTVKNWSPKNNPTEISSLRMQNIGMSIQTQPVDYSQELIVELLDFMAEGAFIRQLRRCSPANTFVTQTSYSGQLGERLNKTFLKGCLNYRMENTLALIENPTQGLKTLSGTISWEALNKTALKDLQQRTALFTSWYKSRMFCQLKPDQRSLTNRYGYNPNYQQTGSSSMNRFKDRIKARLRESTHQAHPLYAMSGSIRGTFGSRGYETRLQRPLTGPVTQMSQEFLNIQFK</sequence>
<name>YCX1_OSTTA</name>
<geneLocation type="chloroplast"/>